<reference key="1">
    <citation type="submission" date="2007-11" db="EMBL/GenBank/DDBJ databases">
        <authorList>
            <consortium name="The Salmonella enterica serovar Arizonae Genome Sequencing Project"/>
            <person name="McClelland M."/>
            <person name="Sanderson E.K."/>
            <person name="Porwollik S."/>
            <person name="Spieth J."/>
            <person name="Clifton W.S."/>
            <person name="Fulton R."/>
            <person name="Chunyan W."/>
            <person name="Wollam A."/>
            <person name="Shah N."/>
            <person name="Pepin K."/>
            <person name="Bhonagiri V."/>
            <person name="Nash W."/>
            <person name="Johnson M."/>
            <person name="Thiruvilangam P."/>
            <person name="Wilson R."/>
        </authorList>
    </citation>
    <scope>NUCLEOTIDE SEQUENCE [LARGE SCALE GENOMIC DNA]</scope>
    <source>
        <strain>ATCC BAA-731 / CDC346-86 / RSK2980</strain>
    </source>
</reference>
<gene>
    <name evidence="1" type="primary">msrP</name>
    <name type="ordered locus">SARI_04256</name>
</gene>
<keyword id="KW-0479">Metal-binding</keyword>
<keyword id="KW-0500">Molybdenum</keyword>
<keyword id="KW-0560">Oxidoreductase</keyword>
<keyword id="KW-0574">Periplasm</keyword>
<keyword id="KW-1185">Reference proteome</keyword>
<keyword id="KW-0732">Signal</keyword>
<protein>
    <recommendedName>
        <fullName evidence="1">Protein-methionine-sulfoxide reductase catalytic subunit MsrP</fullName>
        <ecNumber evidence="1">1.8.5.-</ecNumber>
    </recommendedName>
</protein>
<name>MSRP_SALAR</name>
<proteinExistence type="inferred from homology"/>
<comment type="function">
    <text evidence="1">Part of the MsrPQ system that repairs oxidized periplasmic proteins containing methionine sulfoxide residues (Met-O), using respiratory chain electrons. Thus protects these proteins from oxidative-stress damage caused by reactive species of oxygen and chlorine generated by the host defense mechanisms. MsrPQ is essential for the maintenance of envelope integrity under bleach stress, rescuing a wide series of structurally unrelated periplasmic proteins from methionine oxidation, including the primary periplasmic chaperone SurA and the lipoprotein Pal. The catalytic subunit MsrP is non-stereospecific, being able to reduce both (R-) and (S-) diastereoisomers of methionine sulfoxide.</text>
</comment>
<comment type="catalytic activity">
    <reaction evidence="1">
        <text>L-methionyl-[protein] + a quinone + H2O = L-methionyl-(S)-S-oxide-[protein] + a quinol</text>
        <dbReference type="Rhea" id="RHEA:51292"/>
        <dbReference type="Rhea" id="RHEA-COMP:12313"/>
        <dbReference type="Rhea" id="RHEA-COMP:12315"/>
        <dbReference type="ChEBI" id="CHEBI:15377"/>
        <dbReference type="ChEBI" id="CHEBI:16044"/>
        <dbReference type="ChEBI" id="CHEBI:24646"/>
        <dbReference type="ChEBI" id="CHEBI:44120"/>
        <dbReference type="ChEBI" id="CHEBI:132124"/>
    </reaction>
</comment>
<comment type="catalytic activity">
    <reaction evidence="1">
        <text>L-methionyl-[protein] + a quinone + H2O = L-methionyl-(R)-S-oxide-[protein] + a quinol</text>
        <dbReference type="Rhea" id="RHEA:51296"/>
        <dbReference type="Rhea" id="RHEA-COMP:12313"/>
        <dbReference type="Rhea" id="RHEA-COMP:12314"/>
        <dbReference type="ChEBI" id="CHEBI:15377"/>
        <dbReference type="ChEBI" id="CHEBI:16044"/>
        <dbReference type="ChEBI" id="CHEBI:24646"/>
        <dbReference type="ChEBI" id="CHEBI:45764"/>
        <dbReference type="ChEBI" id="CHEBI:132124"/>
    </reaction>
</comment>
<comment type="cofactor">
    <cofactor evidence="1">
        <name>Mo-molybdopterin</name>
        <dbReference type="ChEBI" id="CHEBI:71302"/>
    </cofactor>
    <text evidence="1">Binds 1 Mo-molybdopterin (Mo-MPT) cofactor per subunit.</text>
</comment>
<comment type="subunit">
    <text evidence="1">Heterodimer of a catalytic subunit (MsrP) and a heme-binding subunit (MsrQ).</text>
</comment>
<comment type="subcellular location">
    <subcellularLocation>
        <location evidence="1">Periplasm</location>
    </subcellularLocation>
    <text evidence="1">Is attached to the inner membrane when interacting with the MsrQ subunit.</text>
</comment>
<comment type="PTM">
    <text evidence="1">Predicted to be exported by the Tat system. The position of the signal peptide cleavage has not been experimentally proven.</text>
</comment>
<comment type="similarity">
    <text evidence="1">Belongs to the MsrP family.</text>
</comment>
<sequence length="334" mass="37491">MKKIRPLTEADVTAESAFFMQRRQVLKALGISAAALSLPSTAQADLLSWFKGNDRPKAPVGKPLEFSQPAAWRSDLALTPEDKVTGYNNFYEFGLDKADPAANAGSLKTEPWTLKISGEVAKPYTLDYDDLTHRFPLEERIYRMRCVEAWSMVVPWIGFPLYKLLTQAQPTSHAKYVAFETLYAPDDMPGQKDRFVGGGLKYPYVEGLRLDEAMHPLTLMTVGVYGKALPPQNGAPIRLIVPWKYGFKGIKSIVSIKLTRERPPTTWNLSAPNEYGFYANVNPHVDHPRWSQATERFIGSGGILDVQRQPTLLFNGYASEVASLYRGLNLRENF</sequence>
<accession>A9MNV7</accession>
<dbReference type="EC" id="1.8.5.-" evidence="1"/>
<dbReference type="EMBL" id="CP000880">
    <property type="protein sequence ID" value="ABX24039.1"/>
    <property type="molecule type" value="Genomic_DNA"/>
</dbReference>
<dbReference type="SMR" id="A9MNV7"/>
<dbReference type="STRING" id="41514.SARI_04256"/>
<dbReference type="KEGG" id="ses:SARI_04256"/>
<dbReference type="HOGENOM" id="CLU_045520_0_0_6"/>
<dbReference type="Proteomes" id="UP000002084">
    <property type="component" value="Chromosome"/>
</dbReference>
<dbReference type="GO" id="GO:0042597">
    <property type="term" value="C:periplasmic space"/>
    <property type="evidence" value="ECO:0007669"/>
    <property type="project" value="UniProtKB-SubCell"/>
</dbReference>
<dbReference type="GO" id="GO:0046872">
    <property type="term" value="F:metal ion binding"/>
    <property type="evidence" value="ECO:0007669"/>
    <property type="project" value="UniProtKB-KW"/>
</dbReference>
<dbReference type="GO" id="GO:0043546">
    <property type="term" value="F:molybdopterin cofactor binding"/>
    <property type="evidence" value="ECO:0007669"/>
    <property type="project" value="UniProtKB-UniRule"/>
</dbReference>
<dbReference type="GO" id="GO:0016672">
    <property type="term" value="F:oxidoreductase activity, acting on a sulfur group of donors, quinone or similar compound as acceptor"/>
    <property type="evidence" value="ECO:0007669"/>
    <property type="project" value="UniProtKB-UniRule"/>
</dbReference>
<dbReference type="GO" id="GO:0030091">
    <property type="term" value="P:protein repair"/>
    <property type="evidence" value="ECO:0007669"/>
    <property type="project" value="UniProtKB-UniRule"/>
</dbReference>
<dbReference type="CDD" id="cd02107">
    <property type="entry name" value="YedY_like_Moco"/>
    <property type="match status" value="1"/>
</dbReference>
<dbReference type="FunFam" id="3.90.420.10:FF:000001">
    <property type="entry name" value="Protein-methionine-sulfoxide reductase catalytic subunit MsrP"/>
    <property type="match status" value="1"/>
</dbReference>
<dbReference type="Gene3D" id="3.90.420.10">
    <property type="entry name" value="Oxidoreductase, molybdopterin-binding domain"/>
    <property type="match status" value="1"/>
</dbReference>
<dbReference type="HAMAP" id="MF_01206">
    <property type="entry name" value="MsrP"/>
    <property type="match status" value="1"/>
</dbReference>
<dbReference type="InterPro" id="IPR022867">
    <property type="entry name" value="MsrP"/>
</dbReference>
<dbReference type="InterPro" id="IPR000572">
    <property type="entry name" value="OxRdtase_Mopterin-bd_dom"/>
</dbReference>
<dbReference type="InterPro" id="IPR036374">
    <property type="entry name" value="OxRdtase_Mopterin-bd_sf"/>
</dbReference>
<dbReference type="InterPro" id="IPR006311">
    <property type="entry name" value="TAT_signal"/>
</dbReference>
<dbReference type="NCBIfam" id="NF003767">
    <property type="entry name" value="PRK05363.1"/>
    <property type="match status" value="1"/>
</dbReference>
<dbReference type="PANTHER" id="PTHR43032">
    <property type="entry name" value="PROTEIN-METHIONINE-SULFOXIDE REDUCTASE"/>
    <property type="match status" value="1"/>
</dbReference>
<dbReference type="PANTHER" id="PTHR43032:SF3">
    <property type="entry name" value="PROTEIN-METHIONINE-SULFOXIDE REDUCTASE CATALYTIC SUBUNIT MSRP"/>
    <property type="match status" value="1"/>
</dbReference>
<dbReference type="Pfam" id="PF00174">
    <property type="entry name" value="Oxidored_molyb"/>
    <property type="match status" value="1"/>
</dbReference>
<dbReference type="SUPFAM" id="SSF56524">
    <property type="entry name" value="Oxidoreductase molybdopterin-binding domain"/>
    <property type="match status" value="1"/>
</dbReference>
<dbReference type="PROSITE" id="PS51318">
    <property type="entry name" value="TAT"/>
    <property type="match status" value="1"/>
</dbReference>
<feature type="signal peptide" description="Tat-type signal" evidence="1">
    <location>
        <begin position="1"/>
        <end position="44"/>
    </location>
</feature>
<feature type="chain" id="PRO_1000085521" description="Protein-methionine-sulfoxide reductase catalytic subunit MsrP" evidence="1">
    <location>
        <begin position="45"/>
        <end position="334"/>
    </location>
</feature>
<feature type="binding site" evidence="1">
    <location>
        <position position="88"/>
    </location>
    <ligand>
        <name>Mo-molybdopterin</name>
        <dbReference type="ChEBI" id="CHEBI:71302"/>
    </ligand>
</feature>
<feature type="binding site" evidence="1">
    <location>
        <begin position="91"/>
        <end position="92"/>
    </location>
    <ligand>
        <name>Mo-molybdopterin</name>
        <dbReference type="ChEBI" id="CHEBI:71302"/>
    </ligand>
</feature>
<feature type="binding site" evidence="1">
    <location>
        <position position="146"/>
    </location>
    <ligand>
        <name>Mo-molybdopterin</name>
        <dbReference type="ChEBI" id="CHEBI:71302"/>
    </ligand>
    <ligandPart>
        <name>Mo</name>
        <dbReference type="ChEBI" id="CHEBI:28685"/>
    </ligandPart>
</feature>
<feature type="binding site" evidence="1">
    <location>
        <position position="181"/>
    </location>
    <ligand>
        <name>Mo-molybdopterin</name>
        <dbReference type="ChEBI" id="CHEBI:71302"/>
    </ligand>
</feature>
<feature type="binding site" evidence="1">
    <location>
        <position position="233"/>
    </location>
    <ligand>
        <name>Mo-molybdopterin</name>
        <dbReference type="ChEBI" id="CHEBI:71302"/>
    </ligand>
</feature>
<feature type="binding site" evidence="1">
    <location>
        <position position="238"/>
    </location>
    <ligand>
        <name>Mo-molybdopterin</name>
        <dbReference type="ChEBI" id="CHEBI:71302"/>
    </ligand>
</feature>
<feature type="binding site" evidence="1">
    <location>
        <begin position="249"/>
        <end position="251"/>
    </location>
    <ligand>
        <name>Mo-molybdopterin</name>
        <dbReference type="ChEBI" id="CHEBI:71302"/>
    </ligand>
</feature>
<organism>
    <name type="scientific">Salmonella arizonae (strain ATCC BAA-731 / CDC346-86 / RSK2980)</name>
    <dbReference type="NCBI Taxonomy" id="41514"/>
    <lineage>
        <taxon>Bacteria</taxon>
        <taxon>Pseudomonadati</taxon>
        <taxon>Pseudomonadota</taxon>
        <taxon>Gammaproteobacteria</taxon>
        <taxon>Enterobacterales</taxon>
        <taxon>Enterobacteriaceae</taxon>
        <taxon>Salmonella</taxon>
    </lineage>
</organism>
<evidence type="ECO:0000255" key="1">
    <source>
        <dbReference type="HAMAP-Rule" id="MF_01206"/>
    </source>
</evidence>